<reference key="1">
    <citation type="journal article" date="2004" name="Nat. Biotechnol.">
        <title>The genome sequence of the anaerobic, sulfate-reducing bacterium Desulfovibrio vulgaris Hildenborough.</title>
        <authorList>
            <person name="Heidelberg J.F."/>
            <person name="Seshadri R."/>
            <person name="Haveman S.A."/>
            <person name="Hemme C.L."/>
            <person name="Paulsen I.T."/>
            <person name="Kolonay J.F."/>
            <person name="Eisen J.A."/>
            <person name="Ward N.L."/>
            <person name="Methe B.A."/>
            <person name="Brinkac L.M."/>
            <person name="Daugherty S.C."/>
            <person name="DeBoy R.T."/>
            <person name="Dodson R.J."/>
            <person name="Durkin A.S."/>
            <person name="Madupu R."/>
            <person name="Nelson W.C."/>
            <person name="Sullivan S.A."/>
            <person name="Fouts D.E."/>
            <person name="Haft D.H."/>
            <person name="Selengut J."/>
            <person name="Peterson J.D."/>
            <person name="Davidsen T.M."/>
            <person name="Zafar N."/>
            <person name="Zhou L."/>
            <person name="Radune D."/>
            <person name="Dimitrov G."/>
            <person name="Hance M."/>
            <person name="Tran K."/>
            <person name="Khouri H.M."/>
            <person name="Gill J."/>
            <person name="Utterback T.R."/>
            <person name="Feldblyum T.V."/>
            <person name="Wall J.D."/>
            <person name="Voordouw G."/>
            <person name="Fraser C.M."/>
        </authorList>
    </citation>
    <scope>NUCLEOTIDE SEQUENCE [LARGE SCALE GENOMIC DNA]</scope>
    <source>
        <strain>ATCC 29579 / DSM 644 / CCUG 34227 / NCIMB 8303 / VKM B-1760 / Hildenborough</strain>
    </source>
</reference>
<protein>
    <recommendedName>
        <fullName evidence="1">Adenosylhomocysteinase</fullName>
        <ecNumber evidence="1">3.13.2.1</ecNumber>
    </recommendedName>
    <alternativeName>
        <fullName evidence="1">S-adenosyl-L-homocysteine hydrolase</fullName>
        <shortName evidence="1">AdoHcyase</shortName>
    </alternativeName>
</protein>
<dbReference type="EC" id="3.13.2.1" evidence="1"/>
<dbReference type="EMBL" id="AE017285">
    <property type="protein sequence ID" value="AAS95088.1"/>
    <property type="molecule type" value="Genomic_DNA"/>
</dbReference>
<dbReference type="RefSeq" id="WP_010937910.1">
    <property type="nucleotide sequence ID" value="NC_002937.3"/>
</dbReference>
<dbReference type="RefSeq" id="YP_009829.1">
    <property type="nucleotide sequence ID" value="NC_002937.3"/>
</dbReference>
<dbReference type="SMR" id="Q72EH1"/>
<dbReference type="IntAct" id="Q72EH1">
    <property type="interactions" value="1"/>
</dbReference>
<dbReference type="STRING" id="882.DVU_0607"/>
<dbReference type="PaxDb" id="882-DVU_0607"/>
<dbReference type="EnsemblBacteria" id="AAS95088">
    <property type="protein sequence ID" value="AAS95088"/>
    <property type="gene ID" value="DVU_0607"/>
</dbReference>
<dbReference type="KEGG" id="dvu:DVU_0607"/>
<dbReference type="PATRIC" id="fig|882.5.peg.569"/>
<dbReference type="eggNOG" id="COG0499">
    <property type="taxonomic scope" value="Bacteria"/>
</dbReference>
<dbReference type="HOGENOM" id="CLU_025194_2_0_7"/>
<dbReference type="OrthoDB" id="9802717at2"/>
<dbReference type="PhylomeDB" id="Q72EH1"/>
<dbReference type="UniPathway" id="UPA00314">
    <property type="reaction ID" value="UER00076"/>
</dbReference>
<dbReference type="Proteomes" id="UP000002194">
    <property type="component" value="Chromosome"/>
</dbReference>
<dbReference type="GO" id="GO:0005829">
    <property type="term" value="C:cytosol"/>
    <property type="evidence" value="ECO:0007669"/>
    <property type="project" value="TreeGrafter"/>
</dbReference>
<dbReference type="GO" id="GO:0004013">
    <property type="term" value="F:adenosylhomocysteinase activity"/>
    <property type="evidence" value="ECO:0007669"/>
    <property type="project" value="UniProtKB-UniRule"/>
</dbReference>
<dbReference type="GO" id="GO:0071269">
    <property type="term" value="P:L-homocysteine biosynthetic process"/>
    <property type="evidence" value="ECO:0007669"/>
    <property type="project" value="UniProtKB-UniRule"/>
</dbReference>
<dbReference type="GO" id="GO:0006730">
    <property type="term" value="P:one-carbon metabolic process"/>
    <property type="evidence" value="ECO:0007669"/>
    <property type="project" value="UniProtKB-KW"/>
</dbReference>
<dbReference type="GO" id="GO:0033353">
    <property type="term" value="P:S-adenosylmethionine cycle"/>
    <property type="evidence" value="ECO:0007669"/>
    <property type="project" value="TreeGrafter"/>
</dbReference>
<dbReference type="CDD" id="cd00401">
    <property type="entry name" value="SAHH"/>
    <property type="match status" value="1"/>
</dbReference>
<dbReference type="FunFam" id="3.40.50.720:FF:000004">
    <property type="entry name" value="Adenosylhomocysteinase"/>
    <property type="match status" value="1"/>
</dbReference>
<dbReference type="Gene3D" id="3.40.50.1480">
    <property type="entry name" value="Adenosylhomocysteinase-like"/>
    <property type="match status" value="1"/>
</dbReference>
<dbReference type="Gene3D" id="3.40.50.720">
    <property type="entry name" value="NAD(P)-binding Rossmann-like Domain"/>
    <property type="match status" value="1"/>
</dbReference>
<dbReference type="HAMAP" id="MF_00563">
    <property type="entry name" value="AdoHcyase"/>
    <property type="match status" value="1"/>
</dbReference>
<dbReference type="InterPro" id="IPR042172">
    <property type="entry name" value="Adenosylhomocyst_ase-like_sf"/>
</dbReference>
<dbReference type="InterPro" id="IPR000043">
    <property type="entry name" value="Adenosylhomocysteinase-like"/>
</dbReference>
<dbReference type="InterPro" id="IPR015878">
    <property type="entry name" value="Ado_hCys_hydrolase_NAD-bd"/>
</dbReference>
<dbReference type="InterPro" id="IPR036291">
    <property type="entry name" value="NAD(P)-bd_dom_sf"/>
</dbReference>
<dbReference type="InterPro" id="IPR020082">
    <property type="entry name" value="S-Ado-L-homoCys_hydrolase_CS"/>
</dbReference>
<dbReference type="NCBIfam" id="TIGR00936">
    <property type="entry name" value="ahcY"/>
    <property type="match status" value="1"/>
</dbReference>
<dbReference type="NCBIfam" id="NF004005">
    <property type="entry name" value="PRK05476.2-3"/>
    <property type="match status" value="1"/>
</dbReference>
<dbReference type="PANTHER" id="PTHR23420">
    <property type="entry name" value="ADENOSYLHOMOCYSTEINASE"/>
    <property type="match status" value="1"/>
</dbReference>
<dbReference type="PANTHER" id="PTHR23420:SF0">
    <property type="entry name" value="ADENOSYLHOMOCYSTEINASE"/>
    <property type="match status" value="1"/>
</dbReference>
<dbReference type="Pfam" id="PF05221">
    <property type="entry name" value="AdoHcyase"/>
    <property type="match status" value="1"/>
</dbReference>
<dbReference type="Pfam" id="PF00670">
    <property type="entry name" value="AdoHcyase_NAD"/>
    <property type="match status" value="1"/>
</dbReference>
<dbReference type="PIRSF" id="PIRSF001109">
    <property type="entry name" value="Ad_hcy_hydrolase"/>
    <property type="match status" value="1"/>
</dbReference>
<dbReference type="SMART" id="SM00996">
    <property type="entry name" value="AdoHcyase"/>
    <property type="match status" value="1"/>
</dbReference>
<dbReference type="SMART" id="SM00997">
    <property type="entry name" value="AdoHcyase_NAD"/>
    <property type="match status" value="1"/>
</dbReference>
<dbReference type="SUPFAM" id="SSF52283">
    <property type="entry name" value="Formate/glycerate dehydrogenase catalytic domain-like"/>
    <property type="match status" value="1"/>
</dbReference>
<dbReference type="SUPFAM" id="SSF51735">
    <property type="entry name" value="NAD(P)-binding Rossmann-fold domains"/>
    <property type="match status" value="1"/>
</dbReference>
<dbReference type="PROSITE" id="PS00738">
    <property type="entry name" value="ADOHCYASE_1"/>
    <property type="match status" value="1"/>
</dbReference>
<dbReference type="PROSITE" id="PS00739">
    <property type="entry name" value="ADOHCYASE_2"/>
    <property type="match status" value="1"/>
</dbReference>
<feature type="chain" id="PRO_0000116962" description="Adenosylhomocysteinase">
    <location>
        <begin position="1"/>
        <end position="479"/>
    </location>
</feature>
<feature type="binding site" evidence="1">
    <location>
        <position position="66"/>
    </location>
    <ligand>
        <name>substrate</name>
    </ligand>
</feature>
<feature type="binding site" evidence="1">
    <location>
        <position position="142"/>
    </location>
    <ligand>
        <name>substrate</name>
    </ligand>
</feature>
<feature type="binding site" evidence="1">
    <location>
        <position position="203"/>
    </location>
    <ligand>
        <name>substrate</name>
    </ligand>
</feature>
<feature type="binding site" evidence="1">
    <location>
        <begin position="204"/>
        <end position="206"/>
    </location>
    <ligand>
        <name>NAD(+)</name>
        <dbReference type="ChEBI" id="CHEBI:57540"/>
    </ligand>
</feature>
<feature type="binding site" evidence="1">
    <location>
        <position position="233"/>
    </location>
    <ligand>
        <name>substrate</name>
    </ligand>
</feature>
<feature type="binding site" evidence="1">
    <location>
        <position position="237"/>
    </location>
    <ligand>
        <name>substrate</name>
    </ligand>
</feature>
<feature type="binding site" evidence="1">
    <location>
        <position position="238"/>
    </location>
    <ligand>
        <name>NAD(+)</name>
        <dbReference type="ChEBI" id="CHEBI:57540"/>
    </ligand>
</feature>
<feature type="binding site" evidence="1">
    <location>
        <begin position="267"/>
        <end position="272"/>
    </location>
    <ligand>
        <name>NAD(+)</name>
        <dbReference type="ChEBI" id="CHEBI:57540"/>
    </ligand>
</feature>
<feature type="binding site" evidence="1">
    <location>
        <position position="290"/>
    </location>
    <ligand>
        <name>NAD(+)</name>
        <dbReference type="ChEBI" id="CHEBI:57540"/>
    </ligand>
</feature>
<feature type="binding site" evidence="1">
    <location>
        <position position="325"/>
    </location>
    <ligand>
        <name>NAD(+)</name>
        <dbReference type="ChEBI" id="CHEBI:57540"/>
    </ligand>
</feature>
<feature type="binding site" evidence="1">
    <location>
        <begin position="346"/>
        <end position="348"/>
    </location>
    <ligand>
        <name>NAD(+)</name>
        <dbReference type="ChEBI" id="CHEBI:57540"/>
    </ligand>
</feature>
<feature type="binding site" evidence="1">
    <location>
        <position position="394"/>
    </location>
    <ligand>
        <name>NAD(+)</name>
        <dbReference type="ChEBI" id="CHEBI:57540"/>
    </ligand>
</feature>
<sequence>MTDAKRAQKLDLSLDHKVADMSLADYGRKDLQLSEREMPGLMELIRKYGGTKPLKGLKVTGSLHMTIQTAMLIRTLYELGADIRWASCNIFSTQDHAAAAIAASGMAKVFAWKGETLEDYWWCTEMALTWPDGSGPDLLVDDGGDATLFIHKGVEVENDPSLLKKAYDNKEFQIIMDRLALAYEQDPGRWQRVAAKVRGVSEETTTGVHRLYQLEQEGKLLFPAINVNDAVTKSKFDNLYGCRESLADGIKRATDVMVAGKVVVVAGYGDVGKGCAQSMRGFGARVLVTEIDPICALQAAMEGYEVTTMEEAVRTGDIFVTATGNCNVITGAHMEAMKDEAIVCNIGHFDNEIDMHYLENTEGCVCLNIKPQVDKWTLRSGRSIIVLAEGRLVNLGCATGHPSFVMSASFTNQTLAQIELATNPDLERKVYTLPKKLDEEVARLHLDRLGVKLTRLSKDQADYIGVSPEGPFKPDHYRY</sequence>
<gene>
    <name evidence="1" type="primary">ahcY</name>
    <name type="ordered locus">DVU_0607</name>
</gene>
<evidence type="ECO:0000255" key="1">
    <source>
        <dbReference type="HAMAP-Rule" id="MF_00563"/>
    </source>
</evidence>
<keyword id="KW-0963">Cytoplasm</keyword>
<keyword id="KW-0378">Hydrolase</keyword>
<keyword id="KW-0520">NAD</keyword>
<keyword id="KW-0554">One-carbon metabolism</keyword>
<keyword id="KW-1185">Reference proteome</keyword>
<accession>Q72EH1</accession>
<name>SAHH_NITV2</name>
<comment type="function">
    <text evidence="1">May play a key role in the regulation of the intracellular concentration of adenosylhomocysteine.</text>
</comment>
<comment type="catalytic activity">
    <reaction evidence="1">
        <text>S-adenosyl-L-homocysteine + H2O = L-homocysteine + adenosine</text>
        <dbReference type="Rhea" id="RHEA:21708"/>
        <dbReference type="ChEBI" id="CHEBI:15377"/>
        <dbReference type="ChEBI" id="CHEBI:16335"/>
        <dbReference type="ChEBI" id="CHEBI:57856"/>
        <dbReference type="ChEBI" id="CHEBI:58199"/>
        <dbReference type="EC" id="3.13.2.1"/>
    </reaction>
</comment>
<comment type="cofactor">
    <cofactor evidence="1">
        <name>NAD(+)</name>
        <dbReference type="ChEBI" id="CHEBI:57540"/>
    </cofactor>
    <text evidence="1">Binds 1 NAD(+) per subunit.</text>
</comment>
<comment type="pathway">
    <text evidence="1">Amino-acid biosynthesis; L-homocysteine biosynthesis; L-homocysteine from S-adenosyl-L-homocysteine: step 1/1.</text>
</comment>
<comment type="subcellular location">
    <subcellularLocation>
        <location evidence="1">Cytoplasm</location>
    </subcellularLocation>
</comment>
<comment type="similarity">
    <text evidence="1">Belongs to the adenosylhomocysteinase family.</text>
</comment>
<proteinExistence type="inferred from homology"/>
<organism>
    <name type="scientific">Nitratidesulfovibrio vulgaris (strain ATCC 29579 / DSM 644 / CCUG 34227 / NCIMB 8303 / VKM B-1760 / Hildenborough)</name>
    <name type="common">Desulfovibrio vulgaris</name>
    <dbReference type="NCBI Taxonomy" id="882"/>
    <lineage>
        <taxon>Bacteria</taxon>
        <taxon>Pseudomonadati</taxon>
        <taxon>Thermodesulfobacteriota</taxon>
        <taxon>Desulfovibrionia</taxon>
        <taxon>Desulfovibrionales</taxon>
        <taxon>Desulfovibrionaceae</taxon>
        <taxon>Nitratidesulfovibrio</taxon>
    </lineage>
</organism>